<evidence type="ECO:0000255" key="1">
    <source>
        <dbReference type="HAMAP-Rule" id="MF_01849"/>
    </source>
</evidence>
<evidence type="ECO:0000255" key="2">
    <source>
        <dbReference type="PROSITE-ProRule" id="PRU01266"/>
    </source>
</evidence>
<sequence>MTANAPITQDVMTLPRKLPEGGPVNIVGLTREELLAALVAAGTPERQAKMRAGQVWQWVYHWGVRDFAQMTNLAKDYRALLAEHFAIVLPEVVTRQISADGTRKYLIRIAGGHEVETVYIPEEGRGTLCVSSQVGCTLTCSFCHTGTQKLVRNLTAAEIVGQLMLVRDDLGEWPERGAPKDETRLVSNLVLMGMGEPLYNFENVRNAMKVVMDGEGLSLSRRRITLSTSGVVPEIARTAEEIGCQLAISFHATTDEVRDILVPINKRWNIRTLLDSLRDYPRLSNSERITFEYVMLDGVNDTDADARRLVKLISGIPSKINLIPFNEWPGAPYRRSTPERIAAFADIIYKAGYASPIRTPRGEDIMAACGQLKSATERARKSRAQIAAETGL</sequence>
<keyword id="KW-0004">4Fe-4S</keyword>
<keyword id="KW-0963">Cytoplasm</keyword>
<keyword id="KW-1015">Disulfide bond</keyword>
<keyword id="KW-0408">Iron</keyword>
<keyword id="KW-0411">Iron-sulfur</keyword>
<keyword id="KW-0479">Metal-binding</keyword>
<keyword id="KW-0489">Methyltransferase</keyword>
<keyword id="KW-1185">Reference proteome</keyword>
<keyword id="KW-0698">rRNA processing</keyword>
<keyword id="KW-0949">S-adenosyl-L-methionine</keyword>
<keyword id="KW-0808">Transferase</keyword>
<keyword id="KW-0819">tRNA processing</keyword>
<name>RLMN_CERS4</name>
<protein>
    <recommendedName>
        <fullName evidence="1">Dual-specificity RNA methyltransferase RlmN</fullName>
        <ecNumber evidence="1">2.1.1.192</ecNumber>
    </recommendedName>
    <alternativeName>
        <fullName evidence="1">23S rRNA (adenine(2503)-C(2))-methyltransferase</fullName>
    </alternativeName>
    <alternativeName>
        <fullName evidence="1">23S rRNA m2A2503 methyltransferase</fullName>
    </alternativeName>
    <alternativeName>
        <fullName evidence="1">Ribosomal RNA large subunit methyltransferase N</fullName>
    </alternativeName>
    <alternativeName>
        <fullName evidence="1">tRNA (adenine(37)-C(2))-methyltransferase</fullName>
    </alternativeName>
    <alternativeName>
        <fullName evidence="1">tRNA m2A37 methyltransferase</fullName>
    </alternativeName>
</protein>
<accession>Q3IY22</accession>
<feature type="chain" id="PRO_0000350361" description="Dual-specificity RNA methyltransferase RlmN">
    <location>
        <begin position="1"/>
        <end position="392"/>
    </location>
</feature>
<feature type="domain" description="Radical SAM core" evidence="2">
    <location>
        <begin position="122"/>
        <end position="364"/>
    </location>
</feature>
<feature type="active site" description="Proton acceptor" evidence="1">
    <location>
        <position position="116"/>
    </location>
</feature>
<feature type="active site" description="S-methylcysteine intermediate" evidence="1">
    <location>
        <position position="369"/>
    </location>
</feature>
<feature type="binding site" evidence="1">
    <location>
        <position position="136"/>
    </location>
    <ligand>
        <name>[4Fe-4S] cluster</name>
        <dbReference type="ChEBI" id="CHEBI:49883"/>
        <note>4Fe-4S-S-AdoMet</note>
    </ligand>
</feature>
<feature type="binding site" evidence="1">
    <location>
        <position position="140"/>
    </location>
    <ligand>
        <name>[4Fe-4S] cluster</name>
        <dbReference type="ChEBI" id="CHEBI:49883"/>
        <note>4Fe-4S-S-AdoMet</note>
    </ligand>
</feature>
<feature type="binding site" evidence="1">
    <location>
        <position position="143"/>
    </location>
    <ligand>
        <name>[4Fe-4S] cluster</name>
        <dbReference type="ChEBI" id="CHEBI:49883"/>
        <note>4Fe-4S-S-AdoMet</note>
    </ligand>
</feature>
<feature type="binding site" evidence="1">
    <location>
        <begin position="195"/>
        <end position="196"/>
    </location>
    <ligand>
        <name>S-adenosyl-L-methionine</name>
        <dbReference type="ChEBI" id="CHEBI:59789"/>
    </ligand>
</feature>
<feature type="binding site" evidence="1">
    <location>
        <position position="227"/>
    </location>
    <ligand>
        <name>S-adenosyl-L-methionine</name>
        <dbReference type="ChEBI" id="CHEBI:59789"/>
    </ligand>
</feature>
<feature type="binding site" evidence="1">
    <location>
        <begin position="249"/>
        <end position="251"/>
    </location>
    <ligand>
        <name>S-adenosyl-L-methionine</name>
        <dbReference type="ChEBI" id="CHEBI:59789"/>
    </ligand>
</feature>
<feature type="binding site" evidence="1">
    <location>
        <position position="326"/>
    </location>
    <ligand>
        <name>S-adenosyl-L-methionine</name>
        <dbReference type="ChEBI" id="CHEBI:59789"/>
    </ligand>
</feature>
<feature type="disulfide bond" description="(transient)" evidence="1">
    <location>
        <begin position="129"/>
        <end position="369"/>
    </location>
</feature>
<comment type="function">
    <text evidence="1">Specifically methylates position 2 of adenine 2503 in 23S rRNA and position 2 of adenine 37 in tRNAs. m2A2503 modification seems to play a crucial role in the proofreading step occurring at the peptidyl transferase center and thus would serve to optimize ribosomal fidelity.</text>
</comment>
<comment type="catalytic activity">
    <reaction evidence="1">
        <text>adenosine(2503) in 23S rRNA + 2 reduced [2Fe-2S]-[ferredoxin] + 2 S-adenosyl-L-methionine = 2-methyladenosine(2503) in 23S rRNA + 5'-deoxyadenosine + L-methionine + 2 oxidized [2Fe-2S]-[ferredoxin] + S-adenosyl-L-homocysteine</text>
        <dbReference type="Rhea" id="RHEA:42916"/>
        <dbReference type="Rhea" id="RHEA-COMP:10000"/>
        <dbReference type="Rhea" id="RHEA-COMP:10001"/>
        <dbReference type="Rhea" id="RHEA-COMP:10152"/>
        <dbReference type="Rhea" id="RHEA-COMP:10282"/>
        <dbReference type="ChEBI" id="CHEBI:17319"/>
        <dbReference type="ChEBI" id="CHEBI:33737"/>
        <dbReference type="ChEBI" id="CHEBI:33738"/>
        <dbReference type="ChEBI" id="CHEBI:57844"/>
        <dbReference type="ChEBI" id="CHEBI:57856"/>
        <dbReference type="ChEBI" id="CHEBI:59789"/>
        <dbReference type="ChEBI" id="CHEBI:74411"/>
        <dbReference type="ChEBI" id="CHEBI:74497"/>
        <dbReference type="EC" id="2.1.1.192"/>
    </reaction>
</comment>
<comment type="catalytic activity">
    <reaction evidence="1">
        <text>adenosine(37) in tRNA + 2 reduced [2Fe-2S]-[ferredoxin] + 2 S-adenosyl-L-methionine = 2-methyladenosine(37) in tRNA + 5'-deoxyadenosine + L-methionine + 2 oxidized [2Fe-2S]-[ferredoxin] + S-adenosyl-L-homocysteine</text>
        <dbReference type="Rhea" id="RHEA:43332"/>
        <dbReference type="Rhea" id="RHEA-COMP:10000"/>
        <dbReference type="Rhea" id="RHEA-COMP:10001"/>
        <dbReference type="Rhea" id="RHEA-COMP:10162"/>
        <dbReference type="Rhea" id="RHEA-COMP:10485"/>
        <dbReference type="ChEBI" id="CHEBI:17319"/>
        <dbReference type="ChEBI" id="CHEBI:33737"/>
        <dbReference type="ChEBI" id="CHEBI:33738"/>
        <dbReference type="ChEBI" id="CHEBI:57844"/>
        <dbReference type="ChEBI" id="CHEBI:57856"/>
        <dbReference type="ChEBI" id="CHEBI:59789"/>
        <dbReference type="ChEBI" id="CHEBI:74411"/>
        <dbReference type="ChEBI" id="CHEBI:74497"/>
        <dbReference type="EC" id="2.1.1.192"/>
    </reaction>
</comment>
<comment type="cofactor">
    <cofactor evidence="1">
        <name>[4Fe-4S] cluster</name>
        <dbReference type="ChEBI" id="CHEBI:49883"/>
    </cofactor>
    <text evidence="1">Binds 1 [4Fe-4S] cluster. The cluster is coordinated with 3 cysteines and an exchangeable S-adenosyl-L-methionine.</text>
</comment>
<comment type="subcellular location">
    <subcellularLocation>
        <location evidence="1">Cytoplasm</location>
    </subcellularLocation>
</comment>
<comment type="miscellaneous">
    <text evidence="1">Reaction proceeds by a ping-pong mechanism involving intermediate methylation of a conserved cysteine residue.</text>
</comment>
<comment type="similarity">
    <text evidence="1">Belongs to the radical SAM superfamily. RlmN family.</text>
</comment>
<organism>
    <name type="scientific">Cereibacter sphaeroides (strain ATCC 17023 / DSM 158 / JCM 6121 / CCUG 31486 / LMG 2827 / NBRC 12203 / NCIMB 8253 / ATH 2.4.1.)</name>
    <name type="common">Rhodobacter sphaeroides</name>
    <dbReference type="NCBI Taxonomy" id="272943"/>
    <lineage>
        <taxon>Bacteria</taxon>
        <taxon>Pseudomonadati</taxon>
        <taxon>Pseudomonadota</taxon>
        <taxon>Alphaproteobacteria</taxon>
        <taxon>Rhodobacterales</taxon>
        <taxon>Paracoccaceae</taxon>
        <taxon>Cereibacter</taxon>
    </lineage>
</organism>
<gene>
    <name evidence="1" type="primary">rlmN</name>
    <name type="ordered locus">RHOS4_29940</name>
    <name type="ORF">RSP_1382</name>
</gene>
<dbReference type="EC" id="2.1.1.192" evidence="1"/>
<dbReference type="EMBL" id="CP000143">
    <property type="protein sequence ID" value="ABA80562.1"/>
    <property type="molecule type" value="Genomic_DNA"/>
</dbReference>
<dbReference type="RefSeq" id="WP_002721983.1">
    <property type="nucleotide sequence ID" value="NZ_CP030271.1"/>
</dbReference>
<dbReference type="RefSeq" id="YP_354463.1">
    <property type="nucleotide sequence ID" value="NC_007493.2"/>
</dbReference>
<dbReference type="SMR" id="Q3IY22"/>
<dbReference type="STRING" id="272943.RSP_1382"/>
<dbReference type="EnsemblBacteria" id="ABA80562">
    <property type="protein sequence ID" value="ABA80562"/>
    <property type="gene ID" value="RSP_1382"/>
</dbReference>
<dbReference type="GeneID" id="67448152"/>
<dbReference type="KEGG" id="rsp:RSP_1382"/>
<dbReference type="PATRIC" id="fig|272943.9.peg.3365"/>
<dbReference type="eggNOG" id="COG0820">
    <property type="taxonomic scope" value="Bacteria"/>
</dbReference>
<dbReference type="OrthoDB" id="9793973at2"/>
<dbReference type="PhylomeDB" id="Q3IY22"/>
<dbReference type="Proteomes" id="UP000002703">
    <property type="component" value="Chromosome 1"/>
</dbReference>
<dbReference type="GO" id="GO:0005737">
    <property type="term" value="C:cytoplasm"/>
    <property type="evidence" value="ECO:0007669"/>
    <property type="project" value="UniProtKB-SubCell"/>
</dbReference>
<dbReference type="GO" id="GO:0051539">
    <property type="term" value="F:4 iron, 4 sulfur cluster binding"/>
    <property type="evidence" value="ECO:0007669"/>
    <property type="project" value="UniProtKB-UniRule"/>
</dbReference>
<dbReference type="GO" id="GO:0046872">
    <property type="term" value="F:metal ion binding"/>
    <property type="evidence" value="ECO:0007669"/>
    <property type="project" value="UniProtKB-KW"/>
</dbReference>
<dbReference type="GO" id="GO:0070040">
    <property type="term" value="F:rRNA (adenine(2503)-C2-)-methyltransferase activity"/>
    <property type="evidence" value="ECO:0007669"/>
    <property type="project" value="UniProtKB-UniRule"/>
</dbReference>
<dbReference type="GO" id="GO:0019843">
    <property type="term" value="F:rRNA binding"/>
    <property type="evidence" value="ECO:0007669"/>
    <property type="project" value="UniProtKB-UniRule"/>
</dbReference>
<dbReference type="GO" id="GO:0002935">
    <property type="term" value="F:tRNA (adenine(37)-C2)-methyltransferase activity"/>
    <property type="evidence" value="ECO:0007669"/>
    <property type="project" value="UniProtKB-UniRule"/>
</dbReference>
<dbReference type="GO" id="GO:0000049">
    <property type="term" value="F:tRNA binding"/>
    <property type="evidence" value="ECO:0007669"/>
    <property type="project" value="UniProtKB-UniRule"/>
</dbReference>
<dbReference type="GO" id="GO:0070475">
    <property type="term" value="P:rRNA base methylation"/>
    <property type="evidence" value="ECO:0007669"/>
    <property type="project" value="UniProtKB-UniRule"/>
</dbReference>
<dbReference type="GO" id="GO:0030488">
    <property type="term" value="P:tRNA methylation"/>
    <property type="evidence" value="ECO:0007669"/>
    <property type="project" value="UniProtKB-UniRule"/>
</dbReference>
<dbReference type="CDD" id="cd01335">
    <property type="entry name" value="Radical_SAM"/>
    <property type="match status" value="1"/>
</dbReference>
<dbReference type="FunFam" id="3.20.20.70:FF:000008">
    <property type="entry name" value="Dual-specificity RNA methyltransferase RlmN"/>
    <property type="match status" value="1"/>
</dbReference>
<dbReference type="Gene3D" id="1.10.150.530">
    <property type="match status" value="1"/>
</dbReference>
<dbReference type="Gene3D" id="3.20.20.70">
    <property type="entry name" value="Aldolase class I"/>
    <property type="match status" value="1"/>
</dbReference>
<dbReference type="HAMAP" id="MF_01849">
    <property type="entry name" value="RNA_methyltr_RlmN"/>
    <property type="match status" value="1"/>
</dbReference>
<dbReference type="InterPro" id="IPR013785">
    <property type="entry name" value="Aldolase_TIM"/>
</dbReference>
<dbReference type="InterPro" id="IPR040072">
    <property type="entry name" value="Methyltransferase_A"/>
</dbReference>
<dbReference type="InterPro" id="IPR048641">
    <property type="entry name" value="RlmN_N"/>
</dbReference>
<dbReference type="InterPro" id="IPR027492">
    <property type="entry name" value="RNA_MTrfase_RlmN"/>
</dbReference>
<dbReference type="InterPro" id="IPR004383">
    <property type="entry name" value="rRNA_lsu_MTrfase_RlmN/Cfr"/>
</dbReference>
<dbReference type="InterPro" id="IPR007197">
    <property type="entry name" value="rSAM"/>
</dbReference>
<dbReference type="NCBIfam" id="TIGR00048">
    <property type="entry name" value="rRNA_mod_RlmN"/>
    <property type="match status" value="1"/>
</dbReference>
<dbReference type="PANTHER" id="PTHR30544">
    <property type="entry name" value="23S RRNA METHYLTRANSFERASE"/>
    <property type="match status" value="1"/>
</dbReference>
<dbReference type="PANTHER" id="PTHR30544:SF5">
    <property type="entry name" value="RADICAL SAM CORE DOMAIN-CONTAINING PROTEIN"/>
    <property type="match status" value="1"/>
</dbReference>
<dbReference type="Pfam" id="PF04055">
    <property type="entry name" value="Radical_SAM"/>
    <property type="match status" value="1"/>
</dbReference>
<dbReference type="Pfam" id="PF21016">
    <property type="entry name" value="RlmN_N"/>
    <property type="match status" value="1"/>
</dbReference>
<dbReference type="PIRSF" id="PIRSF006004">
    <property type="entry name" value="CHP00048"/>
    <property type="match status" value="1"/>
</dbReference>
<dbReference type="SFLD" id="SFLDF00275">
    <property type="entry name" value="adenosine_C2_methyltransferase"/>
    <property type="match status" value="1"/>
</dbReference>
<dbReference type="SFLD" id="SFLDG01062">
    <property type="entry name" value="methyltransferase_(Class_A)"/>
    <property type="match status" value="1"/>
</dbReference>
<dbReference type="SUPFAM" id="SSF102114">
    <property type="entry name" value="Radical SAM enzymes"/>
    <property type="match status" value="1"/>
</dbReference>
<dbReference type="PROSITE" id="PS51918">
    <property type="entry name" value="RADICAL_SAM"/>
    <property type="match status" value="1"/>
</dbReference>
<reference key="1">
    <citation type="submission" date="2005-09" db="EMBL/GenBank/DDBJ databases">
        <title>Complete sequence of chromosome 1 of Rhodobacter sphaeroides 2.4.1.</title>
        <authorList>
            <person name="Copeland A."/>
            <person name="Lucas S."/>
            <person name="Lapidus A."/>
            <person name="Barry K."/>
            <person name="Detter J.C."/>
            <person name="Glavina T."/>
            <person name="Hammon N."/>
            <person name="Israni S."/>
            <person name="Pitluck S."/>
            <person name="Richardson P."/>
            <person name="Mackenzie C."/>
            <person name="Choudhary M."/>
            <person name="Larimer F."/>
            <person name="Hauser L.J."/>
            <person name="Land M."/>
            <person name="Donohue T.J."/>
            <person name="Kaplan S."/>
        </authorList>
    </citation>
    <scope>NUCLEOTIDE SEQUENCE [LARGE SCALE GENOMIC DNA]</scope>
    <source>
        <strain>ATCC 17023 / DSM 158 / JCM 6121 / CCUG 31486 / LMG 2827 / NBRC 12203 / NCIMB 8253 / ATH 2.4.1.</strain>
    </source>
</reference>
<proteinExistence type="inferred from homology"/>